<keyword id="KW-0175">Coiled coil</keyword>
<keyword id="KW-0342">GTP-binding</keyword>
<keyword id="KW-0547">Nucleotide-binding</keyword>
<keyword id="KW-0539">Nucleus</keyword>
<keyword id="KW-1185">Reference proteome</keyword>
<keyword id="KW-0690">Ribosome biogenesis</keyword>
<sequence length="577" mass="65195">MMKIRHKNKKPGKGSKGCKKPARQNGKKVTSRPSSAPQIVHGNDHASREAELKKKRVEEMREKQQVAREQERQRHRTMESYCQDVLKRQQEFEQKEEVLQELNMFPQLDDEATRKAYYKEFRKVVEYSDVILEVLDARDPLGCRCFQMEETVLRAEGNKKLVLVLNKIDLVPKEIVEKWLEYLLNELPTVAFKASTQHHQVKNLTRCKVPVDQASESLLKSRACFGAENLMRVLGNYCRLGEVRGHIRVGVVGLPNVGKSSLINSLKRSRACSVGAVPGVTKFMQEVYLDKFIRLLDAPGIVPGPNSEVGTILRNCIHVQKLADPVTPVETILQRCNLEEISSYYGVSGFQTTEHFLTAVAHRLGKKKKGGVYSQEQAAKAVLADWVSGKISFYTLPPPTHTLPTHLSAEIVKEMTEVFDIEDTEHANEDTMECLAVGESDELLGDMDPQEMEVRWLHSPLVKIADAIENRSTVYKIGNLTGYCTKPNRNQMGWPKRNVDHHCPQNNRVVEVSSVDRRPMLQRILETDPLQQGQALASALKNKKKLQKRSDKIATKLSDSMMSMLDLSGNSDDCAGD</sequence>
<feature type="chain" id="PRO_0000284382" description="Guanine nucleotide-binding protein-like 3-like protein">
    <location>
        <begin position="1"/>
        <end position="577"/>
    </location>
</feature>
<feature type="domain" description="CP-type G" evidence="3">
    <location>
        <begin position="118"/>
        <end position="304"/>
    </location>
</feature>
<feature type="region of interest" description="Disordered" evidence="4">
    <location>
        <begin position="1"/>
        <end position="75"/>
    </location>
</feature>
<feature type="region of interest" description="Required for nucleolar localization" evidence="1">
    <location>
        <begin position="9"/>
        <end position="28"/>
    </location>
</feature>
<feature type="coiled-coil region" evidence="2">
    <location>
        <begin position="43"/>
        <end position="103"/>
    </location>
</feature>
<feature type="compositionally biased region" description="Basic residues" evidence="4">
    <location>
        <begin position="1"/>
        <end position="30"/>
    </location>
</feature>
<feature type="compositionally biased region" description="Basic and acidic residues" evidence="4">
    <location>
        <begin position="42"/>
        <end position="75"/>
    </location>
</feature>
<feature type="binding site" evidence="2">
    <location>
        <begin position="166"/>
        <end position="169"/>
    </location>
    <ligand>
        <name>GTP</name>
        <dbReference type="ChEBI" id="CHEBI:37565"/>
    </ligand>
</feature>
<feature type="binding site" evidence="2">
    <location>
        <begin position="253"/>
        <end position="260"/>
    </location>
    <ligand>
        <name>GTP</name>
        <dbReference type="ChEBI" id="CHEBI:37565"/>
    </ligand>
</feature>
<feature type="binding site" evidence="2">
    <location>
        <begin position="297"/>
        <end position="300"/>
    </location>
    <ligand>
        <name>GTP</name>
        <dbReference type="ChEBI" id="CHEBI:37565"/>
    </ligand>
</feature>
<feature type="mutagenesis site" description="No effect on TERF1-binding. Loss of ability to stabilize TERF1 protein." evidence="5">
    <original>N</original>
    <variation>I</variation>
    <location>
        <position position="166"/>
    </location>
</feature>
<feature type="mutagenesis site" description="Mislocalized to the nucleoplasm. No effect on the reduction of MDM2 ubiquitination." evidence="6">
    <original>G</original>
    <variation>V</variation>
    <location>
        <position position="253"/>
    </location>
</feature>
<protein>
    <recommendedName>
        <fullName>Guanine nucleotide-binding protein-like 3-like protein</fullName>
    </recommendedName>
</protein>
<evidence type="ECO:0000250" key="1"/>
<evidence type="ECO:0000255" key="2"/>
<evidence type="ECO:0000255" key="3">
    <source>
        <dbReference type="PROSITE-ProRule" id="PRU01058"/>
    </source>
</evidence>
<evidence type="ECO:0000256" key="4">
    <source>
        <dbReference type="SAM" id="MobiDB-lite"/>
    </source>
</evidence>
<evidence type="ECO:0000269" key="5">
    <source>
    </source>
</evidence>
<evidence type="ECO:0000269" key="6">
    <source>
    </source>
</evidence>
<accession>Q6PGG6</accession>
<comment type="function">
    <text evidence="1 5 6">Stabilizes TERF1 telomeric association by preventing TERF1 recruitment by PML. Stabilizes TERF1 protein by preventing its ubiquitination and hence proteasomal degradation. Does so by interfering with TERF1-binding to FBXO4 E3 ubiquitin-protein ligase. Required for cell proliferation. By stabilizing TRF1 protein during mitosis, promotes metaphase-to-anaphase transition. Stabilizes MDM2 protein by preventing its ubiquitination, and hence proteasomal degradation. By acting on MDM2, may affect TP53 activity. Required for normal processing of ribosomal pre-rRNA. Binds GTP (By similarity).</text>
</comment>
<comment type="subunit">
    <text evidence="5 6">Interacts with MDM2; this interaction, which occurs in the nucleoplasm, stabilizes MDM2. Indirectly interacts with TP53, via MDM2-binding. Interacts with TERF1; this interaction probably occurs in the nucleoplasm and is increased during mitosis, when the nucleolus is disassembled. This binding may promote TERF1 homodimerization. Interacts with TERT.</text>
</comment>
<comment type="subcellular location">
    <subcellularLocation>
        <location evidence="6">Nucleus</location>
        <location evidence="6">Nucleolus</location>
    </subcellularLocation>
</comment>
<comment type="domain">
    <text>In contrast to other GTP-binding proteins, this family is characterized by a circular permutation of the GTPase motifs described by a G4-G1-G3 pattern.</text>
</comment>
<comment type="similarity">
    <text evidence="3">Belongs to the TRAFAC class YlqF/YawG GTPase family.</text>
</comment>
<name>GNL3L_MOUSE</name>
<reference key="1">
    <citation type="journal article" date="2009" name="PLoS Biol.">
        <title>Lineage-specific biology revealed by a finished genome assembly of the mouse.</title>
        <authorList>
            <person name="Church D.M."/>
            <person name="Goodstadt L."/>
            <person name="Hillier L.W."/>
            <person name="Zody M.C."/>
            <person name="Goldstein S."/>
            <person name="She X."/>
            <person name="Bult C.J."/>
            <person name="Agarwala R."/>
            <person name="Cherry J.L."/>
            <person name="DiCuccio M."/>
            <person name="Hlavina W."/>
            <person name="Kapustin Y."/>
            <person name="Meric P."/>
            <person name="Maglott D."/>
            <person name="Birtle Z."/>
            <person name="Marques A.C."/>
            <person name="Graves T."/>
            <person name="Zhou S."/>
            <person name="Teague B."/>
            <person name="Potamousis K."/>
            <person name="Churas C."/>
            <person name="Place M."/>
            <person name="Herschleb J."/>
            <person name="Runnheim R."/>
            <person name="Forrest D."/>
            <person name="Amos-Landgraf J."/>
            <person name="Schwartz D.C."/>
            <person name="Cheng Z."/>
            <person name="Lindblad-Toh K."/>
            <person name="Eichler E.E."/>
            <person name="Ponting C.P."/>
        </authorList>
    </citation>
    <scope>NUCLEOTIDE SEQUENCE [LARGE SCALE GENOMIC DNA]</scope>
    <source>
        <strain>C57BL/6J</strain>
    </source>
</reference>
<reference key="2">
    <citation type="journal article" date="2004" name="Genome Res.">
        <title>The status, quality, and expansion of the NIH full-length cDNA project: the Mammalian Gene Collection (MGC).</title>
        <authorList>
            <consortium name="The MGC Project Team"/>
        </authorList>
    </citation>
    <scope>NUCLEOTIDE SEQUENCE [LARGE SCALE MRNA]</scope>
    <source>
        <strain>C57BL/6J</strain>
        <tissue>Brain</tissue>
    </source>
</reference>
<reference key="3">
    <citation type="journal article" date="2009" name="J. Cell Biol.">
        <title>GNL3L stabilizes the TRF1 complex and promotes mitotic transition.</title>
        <authorList>
            <person name="Zhu Q."/>
            <person name="Meng L."/>
            <person name="Hsu J.K."/>
            <person name="Lin T."/>
            <person name="Teishima J."/>
            <person name="Tsai R.Y."/>
        </authorList>
    </citation>
    <scope>FUNCTION</scope>
    <scope>INTERACTION WITH TERF1 AND TERT</scope>
    <scope>MUTAGENESIS OF ASN-166</scope>
</reference>
<reference key="4">
    <citation type="journal article" date="2011" name="Oncogene">
        <title>GNL3L depletion destabilizes MDM2 and induces p53-dependent G2/M arrest.</title>
        <authorList>
            <person name="Meng L."/>
            <person name="Hsu J.K."/>
            <person name="Tsai R.Y."/>
        </authorList>
    </citation>
    <scope>FUNCTION</scope>
    <scope>INTERACTION WITH MDM2 AND TP53</scope>
    <scope>SUBCELLULAR LOCATION</scope>
    <scope>MUTAGENESIS OF GLY-253</scope>
</reference>
<proteinExistence type="evidence at protein level"/>
<gene>
    <name type="primary">Gnl3l</name>
</gene>
<organism>
    <name type="scientific">Mus musculus</name>
    <name type="common">Mouse</name>
    <dbReference type="NCBI Taxonomy" id="10090"/>
    <lineage>
        <taxon>Eukaryota</taxon>
        <taxon>Metazoa</taxon>
        <taxon>Chordata</taxon>
        <taxon>Craniata</taxon>
        <taxon>Vertebrata</taxon>
        <taxon>Euteleostomi</taxon>
        <taxon>Mammalia</taxon>
        <taxon>Eutheria</taxon>
        <taxon>Euarchontoglires</taxon>
        <taxon>Glires</taxon>
        <taxon>Rodentia</taxon>
        <taxon>Myomorpha</taxon>
        <taxon>Muroidea</taxon>
        <taxon>Muridae</taxon>
        <taxon>Murinae</taxon>
        <taxon>Mus</taxon>
        <taxon>Mus</taxon>
    </lineage>
</organism>
<dbReference type="EMBL" id="AL805937">
    <property type="status" value="NOT_ANNOTATED_CDS"/>
    <property type="molecule type" value="Genomic_DNA"/>
</dbReference>
<dbReference type="EMBL" id="BC057033">
    <property type="protein sequence ID" value="AAH57033.1"/>
    <property type="molecule type" value="mRNA"/>
</dbReference>
<dbReference type="EMBL" id="BC079653">
    <property type="protein sequence ID" value="AAH79653.1"/>
    <property type="molecule type" value="mRNA"/>
</dbReference>
<dbReference type="CCDS" id="CCDS41174.1"/>
<dbReference type="RefSeq" id="NP_001162071.1">
    <property type="nucleotide sequence ID" value="NM_001168600.1"/>
</dbReference>
<dbReference type="RefSeq" id="NP_932778.1">
    <property type="nucleotide sequence ID" value="NM_198110.2"/>
</dbReference>
<dbReference type="RefSeq" id="XP_006528868.1">
    <property type="nucleotide sequence ID" value="XM_006528805.5"/>
</dbReference>
<dbReference type="SMR" id="Q6PGG6"/>
<dbReference type="BioGRID" id="231842">
    <property type="interactions" value="4"/>
</dbReference>
<dbReference type="FunCoup" id="Q6PGG6">
    <property type="interactions" value="3458"/>
</dbReference>
<dbReference type="IntAct" id="Q6PGG6">
    <property type="interactions" value="1"/>
</dbReference>
<dbReference type="MINT" id="Q6PGG6"/>
<dbReference type="STRING" id="10090.ENSMUSP00000108311"/>
<dbReference type="iPTMnet" id="Q6PGG6"/>
<dbReference type="PhosphoSitePlus" id="Q6PGG6"/>
<dbReference type="PaxDb" id="10090-ENSMUSP00000108311"/>
<dbReference type="PeptideAtlas" id="Q6PGG6"/>
<dbReference type="ProteomicsDB" id="271007"/>
<dbReference type="Pumba" id="Q6PGG6"/>
<dbReference type="Antibodypedia" id="43618">
    <property type="antibodies" value="199 antibodies from 24 providers"/>
</dbReference>
<dbReference type="DNASU" id="237107"/>
<dbReference type="Ensembl" id="ENSMUST00000026297.12">
    <property type="protein sequence ID" value="ENSMUSP00000026297.6"/>
    <property type="gene ID" value="ENSMUSG00000025266.12"/>
</dbReference>
<dbReference type="Ensembl" id="ENSMUST00000112691.9">
    <property type="protein sequence ID" value="ENSMUSP00000108311.3"/>
    <property type="gene ID" value="ENSMUSG00000025266.12"/>
</dbReference>
<dbReference type="GeneID" id="237107"/>
<dbReference type="KEGG" id="mmu:237107"/>
<dbReference type="UCSC" id="uc009uou.2">
    <property type="organism name" value="mouse"/>
</dbReference>
<dbReference type="AGR" id="MGI:2448557"/>
<dbReference type="CTD" id="54552"/>
<dbReference type="MGI" id="MGI:2448557">
    <property type="gene designation" value="Gnl3l"/>
</dbReference>
<dbReference type="VEuPathDB" id="HostDB:ENSMUSG00000025266"/>
<dbReference type="eggNOG" id="KOG2484">
    <property type="taxonomic scope" value="Eukaryota"/>
</dbReference>
<dbReference type="GeneTree" id="ENSGT00940000155877"/>
<dbReference type="HOGENOM" id="CLU_011106_5_4_1"/>
<dbReference type="InParanoid" id="Q6PGG6"/>
<dbReference type="OMA" id="NWIKYFR"/>
<dbReference type="OrthoDB" id="444945at2759"/>
<dbReference type="PhylomeDB" id="Q6PGG6"/>
<dbReference type="TreeFam" id="TF313085"/>
<dbReference type="BioGRID-ORCS" id="237107">
    <property type="hits" value="24 hits in 81 CRISPR screens"/>
</dbReference>
<dbReference type="ChiTaRS" id="Gnl3l">
    <property type="organism name" value="mouse"/>
</dbReference>
<dbReference type="PRO" id="PR:Q6PGG6"/>
<dbReference type="Proteomes" id="UP000000589">
    <property type="component" value="Chromosome X"/>
</dbReference>
<dbReference type="RNAct" id="Q6PGG6">
    <property type="molecule type" value="protein"/>
</dbReference>
<dbReference type="Bgee" id="ENSMUSG00000025266">
    <property type="expression patterns" value="Expressed in undifferentiated genital tubercle and 229 other cell types or tissues"/>
</dbReference>
<dbReference type="ExpressionAtlas" id="Q6PGG6">
    <property type="expression patterns" value="baseline and differential"/>
</dbReference>
<dbReference type="GO" id="GO:0005829">
    <property type="term" value="C:cytosol"/>
    <property type="evidence" value="ECO:0007669"/>
    <property type="project" value="Ensembl"/>
</dbReference>
<dbReference type="GO" id="GO:0005730">
    <property type="term" value="C:nucleolus"/>
    <property type="evidence" value="ECO:0007669"/>
    <property type="project" value="UniProtKB-SubCell"/>
</dbReference>
<dbReference type="GO" id="GO:0005654">
    <property type="term" value="C:nucleoplasm"/>
    <property type="evidence" value="ECO:0007669"/>
    <property type="project" value="Ensembl"/>
</dbReference>
<dbReference type="GO" id="GO:0005697">
    <property type="term" value="C:telomerase holoenzyme complex"/>
    <property type="evidence" value="ECO:0007669"/>
    <property type="project" value="Ensembl"/>
</dbReference>
<dbReference type="GO" id="GO:0005525">
    <property type="term" value="F:GTP binding"/>
    <property type="evidence" value="ECO:0007669"/>
    <property type="project" value="UniProtKB-KW"/>
</dbReference>
<dbReference type="GO" id="GO:0033234">
    <property type="term" value="P:negative regulation of protein sumoylation"/>
    <property type="evidence" value="ECO:0007669"/>
    <property type="project" value="Ensembl"/>
</dbReference>
<dbReference type="GO" id="GO:0031397">
    <property type="term" value="P:negative regulation of protein ubiquitination"/>
    <property type="evidence" value="ECO:0007669"/>
    <property type="project" value="Ensembl"/>
</dbReference>
<dbReference type="GO" id="GO:0032211">
    <property type="term" value="P:negative regulation of telomere maintenance via telomerase"/>
    <property type="evidence" value="ECO:0007669"/>
    <property type="project" value="Ensembl"/>
</dbReference>
<dbReference type="GO" id="GO:1904816">
    <property type="term" value="P:positive regulation of protein localization to chromosome, telomeric region"/>
    <property type="evidence" value="ECO:0007669"/>
    <property type="project" value="Ensembl"/>
</dbReference>
<dbReference type="GO" id="GO:0031334">
    <property type="term" value="P:positive regulation of protein-containing complex assembly"/>
    <property type="evidence" value="ECO:0007669"/>
    <property type="project" value="Ensembl"/>
</dbReference>
<dbReference type="GO" id="GO:0031647">
    <property type="term" value="P:regulation of protein stability"/>
    <property type="evidence" value="ECO:0007669"/>
    <property type="project" value="Ensembl"/>
</dbReference>
<dbReference type="GO" id="GO:0042254">
    <property type="term" value="P:ribosome biogenesis"/>
    <property type="evidence" value="ECO:0007669"/>
    <property type="project" value="UniProtKB-KW"/>
</dbReference>
<dbReference type="CDD" id="cd04178">
    <property type="entry name" value="Nucleostemin_like"/>
    <property type="match status" value="1"/>
</dbReference>
<dbReference type="FunFam" id="1.10.1580.10:FF:000002">
    <property type="entry name" value="Guanine nucleotide-binding protein-like 3 (nucleolar)-like"/>
    <property type="match status" value="1"/>
</dbReference>
<dbReference type="FunFam" id="3.40.50.300:FF:000493">
    <property type="entry name" value="Guanine nucleotide-binding protein-like 3-like protein"/>
    <property type="match status" value="1"/>
</dbReference>
<dbReference type="Gene3D" id="1.10.1580.10">
    <property type="match status" value="1"/>
</dbReference>
<dbReference type="Gene3D" id="3.40.50.300">
    <property type="entry name" value="P-loop containing nucleotide triphosphate hydrolases"/>
    <property type="match status" value="1"/>
</dbReference>
<dbReference type="InterPro" id="IPR030378">
    <property type="entry name" value="G_CP_dom"/>
</dbReference>
<dbReference type="InterPro" id="IPR006073">
    <property type="entry name" value="GTP-bd"/>
</dbReference>
<dbReference type="InterPro" id="IPR023179">
    <property type="entry name" value="GTP-bd_ortho_bundle_sf"/>
</dbReference>
<dbReference type="InterPro" id="IPR027417">
    <property type="entry name" value="P-loop_NTPase"/>
</dbReference>
<dbReference type="InterPro" id="IPR050755">
    <property type="entry name" value="TRAFAC_YlqF/YawG_RiboMat"/>
</dbReference>
<dbReference type="PANTHER" id="PTHR11089">
    <property type="entry name" value="GTP-BINDING PROTEIN-RELATED"/>
    <property type="match status" value="1"/>
</dbReference>
<dbReference type="PANTHER" id="PTHR11089:SF33">
    <property type="entry name" value="GUANINE NUCLEOTIDE-BINDING PROTEIN-LIKE 3-LIKE PROTEIN"/>
    <property type="match status" value="1"/>
</dbReference>
<dbReference type="Pfam" id="PF01926">
    <property type="entry name" value="MMR_HSR1"/>
    <property type="match status" value="1"/>
</dbReference>
<dbReference type="PRINTS" id="PR00326">
    <property type="entry name" value="GTP1OBG"/>
</dbReference>
<dbReference type="SUPFAM" id="SSF52540">
    <property type="entry name" value="P-loop containing nucleoside triphosphate hydrolases"/>
    <property type="match status" value="1"/>
</dbReference>
<dbReference type="PROSITE" id="PS51721">
    <property type="entry name" value="G_CP"/>
    <property type="match status" value="1"/>
</dbReference>